<gene>
    <name evidence="7" type="primary">METAP1b</name>
    <name evidence="9" type="ORF">PF3D7_1015300</name>
</gene>
<dbReference type="EC" id="3.4.11.18" evidence="3 5 6"/>
<dbReference type="EMBL" id="LN999944">
    <property type="protein sequence ID" value="CZT98405.1"/>
    <property type="molecule type" value="Genomic_DNA"/>
</dbReference>
<dbReference type="RefSeq" id="XP_001347435.1">
    <property type="nucleotide sequence ID" value="XM_001347399.1"/>
</dbReference>
<dbReference type="PDB" id="3S6B">
    <property type="method" value="X-ray"/>
    <property type="resolution" value="1.95 A"/>
    <property type="chains" value="A=168-517"/>
</dbReference>
<dbReference type="PDBsum" id="3S6B"/>
<dbReference type="SMR" id="Q8IJP2"/>
<dbReference type="FunCoup" id="Q8IJP2">
    <property type="interactions" value="597"/>
</dbReference>
<dbReference type="IntAct" id="Q8IJP2">
    <property type="interactions" value="2"/>
</dbReference>
<dbReference type="STRING" id="36329.Q8IJP2"/>
<dbReference type="MEROPS" id="M24.017"/>
<dbReference type="PaxDb" id="5833-PF10_0150"/>
<dbReference type="EnsemblProtists" id="CZT98405">
    <property type="protein sequence ID" value="CZT98405"/>
    <property type="gene ID" value="PF3D7_1015300"/>
</dbReference>
<dbReference type="GeneID" id="810308"/>
<dbReference type="KEGG" id="pfa:PF3D7_1015300"/>
<dbReference type="VEuPathDB" id="PlasmoDB:PF3D7_1015300"/>
<dbReference type="HOGENOM" id="CLU_015857_2_0_1"/>
<dbReference type="InParanoid" id="Q8IJP2"/>
<dbReference type="OMA" id="INQGTHQ"/>
<dbReference type="OrthoDB" id="3209743at2759"/>
<dbReference type="PhylomeDB" id="Q8IJP2"/>
<dbReference type="EvolutionaryTrace" id="Q8IJP2"/>
<dbReference type="Proteomes" id="UP000001450">
    <property type="component" value="Chromosome 10"/>
</dbReference>
<dbReference type="GO" id="GO:0005829">
    <property type="term" value="C:cytosol"/>
    <property type="evidence" value="ECO:0000318"/>
    <property type="project" value="GO_Central"/>
</dbReference>
<dbReference type="GO" id="GO:0022626">
    <property type="term" value="C:cytosolic ribosome"/>
    <property type="evidence" value="ECO:0007669"/>
    <property type="project" value="UniProtKB-UniRule"/>
</dbReference>
<dbReference type="GO" id="GO:0004239">
    <property type="term" value="F:initiator methionyl aminopeptidase activity"/>
    <property type="evidence" value="ECO:0007669"/>
    <property type="project" value="UniProtKB-UniRule"/>
</dbReference>
<dbReference type="GO" id="GO:0070006">
    <property type="term" value="F:metalloaminopeptidase activity"/>
    <property type="evidence" value="ECO:0000318"/>
    <property type="project" value="GO_Central"/>
</dbReference>
<dbReference type="GO" id="GO:0008235">
    <property type="term" value="F:metalloexopeptidase activity"/>
    <property type="evidence" value="ECO:0000250"/>
    <property type="project" value="GeneDB"/>
</dbReference>
<dbReference type="GO" id="GO:0008270">
    <property type="term" value="F:zinc ion binding"/>
    <property type="evidence" value="ECO:0007669"/>
    <property type="project" value="UniProtKB-KW"/>
</dbReference>
<dbReference type="GO" id="GO:0006508">
    <property type="term" value="P:proteolysis"/>
    <property type="evidence" value="ECO:0000250"/>
    <property type="project" value="GeneDB"/>
</dbReference>
<dbReference type="CDD" id="cd01086">
    <property type="entry name" value="MetAP1"/>
    <property type="match status" value="1"/>
</dbReference>
<dbReference type="FunFam" id="3.90.230.10:FF:000019">
    <property type="entry name" value="Methionine aminopeptidase"/>
    <property type="match status" value="1"/>
</dbReference>
<dbReference type="Gene3D" id="3.90.230.10">
    <property type="entry name" value="Creatinase/methionine aminopeptidase superfamily"/>
    <property type="match status" value="1"/>
</dbReference>
<dbReference type="HAMAP" id="MF_01974">
    <property type="entry name" value="MetAP_1"/>
    <property type="match status" value="1"/>
</dbReference>
<dbReference type="InterPro" id="IPR036005">
    <property type="entry name" value="Creatinase/aminopeptidase-like"/>
</dbReference>
<dbReference type="InterPro" id="IPR000994">
    <property type="entry name" value="Pept_M24"/>
</dbReference>
<dbReference type="InterPro" id="IPR001714">
    <property type="entry name" value="Pept_M24_MAP"/>
</dbReference>
<dbReference type="InterPro" id="IPR002467">
    <property type="entry name" value="Pept_M24A_MAP1"/>
</dbReference>
<dbReference type="InterPro" id="IPR031615">
    <property type="entry name" value="Zfn-C6H2"/>
</dbReference>
<dbReference type="NCBIfam" id="TIGR00500">
    <property type="entry name" value="met_pdase_I"/>
    <property type="match status" value="1"/>
</dbReference>
<dbReference type="PANTHER" id="PTHR43330">
    <property type="entry name" value="METHIONINE AMINOPEPTIDASE"/>
    <property type="match status" value="1"/>
</dbReference>
<dbReference type="PANTHER" id="PTHR43330:SF7">
    <property type="entry name" value="METHIONINE AMINOPEPTIDASE 1"/>
    <property type="match status" value="1"/>
</dbReference>
<dbReference type="Pfam" id="PF00557">
    <property type="entry name" value="Peptidase_M24"/>
    <property type="match status" value="1"/>
</dbReference>
<dbReference type="Pfam" id="PF15801">
    <property type="entry name" value="zf-C6H2"/>
    <property type="match status" value="1"/>
</dbReference>
<dbReference type="PRINTS" id="PR00599">
    <property type="entry name" value="MAPEPTIDASE"/>
</dbReference>
<dbReference type="SUPFAM" id="SSF55920">
    <property type="entry name" value="Creatinase/aminopeptidase"/>
    <property type="match status" value="1"/>
</dbReference>
<dbReference type="PROSITE" id="PS00680">
    <property type="entry name" value="MAP_1"/>
    <property type="match status" value="1"/>
</dbReference>
<dbReference type="PROSITE" id="PS52013">
    <property type="entry name" value="ZF_C6H2"/>
    <property type="match status" value="1"/>
</dbReference>
<accession>Q8IJP2</accession>
<reference evidence="10" key="1">
    <citation type="journal article" date="2002" name="Nature">
        <title>Genome sequence of the human malaria parasite Plasmodium falciparum.</title>
        <authorList>
            <person name="Gardner M.J."/>
            <person name="Hall N."/>
            <person name="Fung E."/>
            <person name="White O."/>
            <person name="Berriman M."/>
            <person name="Hyman R.W."/>
            <person name="Carlton J.M."/>
            <person name="Pain A."/>
            <person name="Nelson K.E."/>
            <person name="Bowman S."/>
            <person name="Paulsen I.T."/>
            <person name="James K.D."/>
            <person name="Eisen J.A."/>
            <person name="Rutherford K.M."/>
            <person name="Salzberg S.L."/>
            <person name="Craig A."/>
            <person name="Kyes S."/>
            <person name="Chan M.-S."/>
            <person name="Nene V."/>
            <person name="Shallom S.J."/>
            <person name="Suh B."/>
            <person name="Peterson J."/>
            <person name="Angiuoli S."/>
            <person name="Pertea M."/>
            <person name="Allen J."/>
            <person name="Selengut J."/>
            <person name="Haft D."/>
            <person name="Mather M.W."/>
            <person name="Vaidya A.B."/>
            <person name="Martin D.M.A."/>
            <person name="Fairlamb A.H."/>
            <person name="Fraunholz M.J."/>
            <person name="Roos D.S."/>
            <person name="Ralph S.A."/>
            <person name="McFadden G.I."/>
            <person name="Cummings L.M."/>
            <person name="Subramanian G.M."/>
            <person name="Mungall C."/>
            <person name="Venter J.C."/>
            <person name="Carucci D.J."/>
            <person name="Hoffman S.L."/>
            <person name="Newbold C."/>
            <person name="Davis R.W."/>
            <person name="Fraser C.M."/>
            <person name="Barrell B.G."/>
        </authorList>
    </citation>
    <scope>NUCLEOTIDE SEQUENCE [LARGE SCALE GENOMIC DNA]</scope>
    <source>
        <strain evidence="10">3D7</strain>
    </source>
</reference>
<reference evidence="8" key="2">
    <citation type="journal article" date="2006" name="Proc. Natl. Acad. Sci. U.S.A.">
        <title>Inhibitors of Plasmodium falciparum methionine aminopeptidase 1b possess antimalarial activity.</title>
        <authorList>
            <person name="Chen X."/>
            <person name="Chong C.R."/>
            <person name="Shi L."/>
            <person name="Yoshimoto T."/>
            <person name="Sullivan D.J. Jr."/>
            <person name="Liu J.O."/>
        </authorList>
    </citation>
    <scope>FUNCTION</scope>
    <scope>CATALYTIC ACTIVITY</scope>
    <scope>ACTIVITY REGULATION</scope>
    <scope>BIOPHYSICOCHEMICAL PROPERTIES</scope>
</reference>
<reference evidence="8" key="3">
    <citation type="journal article" date="2016" name="Appl. Microbiol. Biotechnol.">
        <title>N-Terminal methionine processing by the zinc-activated Plasmodium falciparum methionine aminopeptidase 1b.</title>
        <authorList>
            <person name="Calcagno S."/>
            <person name="Klein C.D."/>
        </authorList>
    </citation>
    <scope>FUNCTION</scope>
    <scope>CATALYTIC ACTIVITY</scope>
    <scope>COFACTOR</scope>
    <scope>BIOPHYSICOCHEMICAL PROPERTIES</scope>
    <scope>MUTAGENESIS OF CYS-316</scope>
</reference>
<reference evidence="11" key="4">
    <citation type="submission" date="2011-05" db="PDB data bank">
        <title>Crystal structure of methionine aminopeptidase 1b from Plasmodium Falciparum, PF10_0150.</title>
        <authorList>
            <person name="Wernimont A.K."/>
            <person name="Artz J.D."/>
            <person name="Crombet L."/>
            <person name="Lew J."/>
            <person name="Weadge J."/>
            <person name="Arrowsmith C.H."/>
            <person name="Edwards A.M."/>
            <person name="Weigelt J."/>
            <person name="Bountra C."/>
            <person name="Hui R."/>
            <person name="Hills T."/>
        </authorList>
    </citation>
    <scope>X-RAY CRYSTALLOGRAPHY (1.95 ANGSTROMS) OF 168-517 IN COMPLEX WITH IRON</scope>
</reference>
<evidence type="ECO:0000255" key="1">
    <source>
        <dbReference type="HAMAP-Rule" id="MF_03174"/>
    </source>
</evidence>
<evidence type="ECO:0000255" key="2">
    <source>
        <dbReference type="PROSITE-ProRule" id="PRU01357"/>
    </source>
</evidence>
<evidence type="ECO:0000255" key="3">
    <source>
        <dbReference type="RuleBase" id="RU003653"/>
    </source>
</evidence>
<evidence type="ECO:0000256" key="4">
    <source>
        <dbReference type="SAM" id="MobiDB-lite"/>
    </source>
</evidence>
<evidence type="ECO:0000269" key="5">
    <source>
    </source>
</evidence>
<evidence type="ECO:0000269" key="6">
    <source>
    </source>
</evidence>
<evidence type="ECO:0000303" key="7">
    <source>
    </source>
</evidence>
<evidence type="ECO:0000305" key="8"/>
<evidence type="ECO:0000312" key="9">
    <source>
        <dbReference type="EMBL" id="CZT98405.1"/>
    </source>
</evidence>
<evidence type="ECO:0000312" key="10">
    <source>
        <dbReference type="Proteomes" id="UP000001450"/>
    </source>
</evidence>
<evidence type="ECO:0007744" key="11">
    <source>
        <dbReference type="PDB" id="3S6B"/>
    </source>
</evidence>
<evidence type="ECO:0007829" key="12">
    <source>
        <dbReference type="PDB" id="3S6B"/>
    </source>
</evidence>
<sequence length="517" mass="59724">MANIDDIEKQIENIKINSDDNKNNVSKNKNILLNGVNLKDHEIKDNVKSVDYNNNNNENDTMNEINKHVKNDEYCNKENSNNNNNNNNNNNNNLDTQINETLNLNEKFEKKNEENLCSGCKKVLIKKLSCPICLKNKIFSYFCNQECFKGSWKEHQKIHENMNKENNEKEDHLKTIVKKHLSPENFDPTNRKYWVYDDHLKNFVNFKFTGDVRPWPLSKINHVPSHIERPDYAISSIPESELIYKRKSDIYVNNEEEIQRIREACILGRKTLDYAHTLVSPGVTTDEIDRKVHEFIIKNNAYPSTLNYYKFPKSCCTSVNEIVCHGIPDYRPLKSGDIINIDISVFYKGVHSDLNETYFVGDINDVPKEGKELVETCYFSLMEAIKKCKPGMFYKNIGTLIDAYVSKKNFSVVRSYSGHGVGKLFHSNPTVPHFKKNKAVGIMKPGHVFTIEPMINQGHYSDVLWPDQWTSATSDGKLSAQFEHTLLITNNGVEILTKRTQDSPPLGFDTKDELYYN</sequence>
<comment type="function">
    <text evidence="1 5 6">Cotranslationally removes the N-terminal methionine from nascent proteins (PubMed:16983082, PubMed:27023914). The N-terminal methionine is often cleaved when the second residue in the primary sequence is small and uncharged (Met-Ala-, Cys, Gly, Pro, Ser, Thr, or Val) (By similarity). May play an important role in parasite growth during the blood asexual stage (PubMed:16983082).</text>
</comment>
<comment type="catalytic activity">
    <reaction evidence="1 5 6">
        <text>Release of N-terminal amino acids, preferentially methionine, from peptides and arylamides.</text>
        <dbReference type="EC" id="3.4.11.18"/>
    </reaction>
</comment>
<comment type="cofactor">
    <cofactor evidence="1 6">
        <name>Zn(2+)</name>
        <dbReference type="ChEBI" id="CHEBI:29105"/>
    </cofactor>
    <cofactor evidence="1 6">
        <name>Co(2+)</name>
        <dbReference type="ChEBI" id="CHEBI:48828"/>
    </cofactor>
    <cofactor evidence="1 6">
        <name>Mn(2+)</name>
        <dbReference type="ChEBI" id="CHEBI:29035"/>
    </cofactor>
    <cofactor evidence="1 6">
        <name>Fe(2+)</name>
        <dbReference type="ChEBI" id="CHEBI:29033"/>
    </cofactor>
    <text evidence="1 6">Highest activity with zinc and cobalt ions, and low activity with manganese or divalent iron ions (PubMed:27023914). Binds 2 divalent metal cations per subunit. Has a high-affinity and a low affinity metal-binding site. The true nature of the physiological cofactor is under debate. The enzyme is active with zinc, cobalt, manganese or divalent iron ions. Has high activity with zinc; zinc cofactor is transferred into the active site region by the ZNG1 zinc chaperone (By similarity).</text>
</comment>
<comment type="activity regulation">
    <text evidence="5">Inhibited by pyrimidine derivative XC11.</text>
</comment>
<comment type="biophysicochemical properties">
    <kinetics>
        <KM evidence="5">327.3 uM for methionine containing-oligopeptide</KM>
        <KM evidence="6">845.08 uM for Met-Gly-Met-Met peptide (in presence of 1 uM Zn(2+), at 37 degrees Celsius, pH 7.5)</KM>
        <KM evidence="6">1117.7 uM for Met-Gly-Met-Met peptide (in presence of 10 uM Zn(2+), at 37 degrees Celsius, pH 7.5)</KM>
        <KM evidence="6">1662.4 uM for Met-Gly-Met-Met peptide (in presence of 100 uM Zn(2+), at 37 degrees Celsius, pH 7.5)</KM>
        <KM evidence="6">1759 uM for Met-Gly-Met-Met peptide (in presence of 1 uM Co(2+), at 37 degrees Celsius, pH 7.5)</KM>
        <KM evidence="6">1142.4 uM for Met-Gly-Met-Met peptide (in presence of 10 uM Co(2+), at 37 degrees Celsius, pH 7.5)</KM>
        <KM evidence="6">1061.5 uM for Met-Gly-Met-Met peptide (in presence of 100 uM Co(2+), at 37 degrees Celsius, pH 7.5)</KM>
        <text evidence="5 6">kcat is 13.9 min(-1) with methionine containing-oligopeptide as substrate (PubMed:16983082). kcat is 552.49 min(-1) in presence of 1 uM Zn(2+), 442.48 min(-1) in presence of 10 uM Zn(2+) and 364.30 min(-1) in presence of 100 uM Zn(2+), with Met-Gly-Met-Met peptide as substrate (PubMed:27023914). kcat is 1005 min(-1) in presence of 1 uM Co(2+), 583.09 min(-1) in presence of 10 uM Co(2+) and 547.95 min(-1) in presence of 100 uM Co(2+), with Met-Gly-Met-Met peptide as substrate (PubMed:27023914).</text>
    </kinetics>
    <phDependence>
        <text evidence="6">Optimum pH is 7.5.</text>
    </phDependence>
    <temperatureDependence>
        <text evidence="6">Optimum temperature is 37 degrees Celsius (PubMed:27023914). However, has substantial activity at 25 degrees Celsius (PubMed:27023914).</text>
    </temperatureDependence>
</comment>
<comment type="subunit">
    <text evidence="1">Associates with the 60S ribosomal subunit of the 80S translational complex.</text>
</comment>
<comment type="subcellular location">
    <subcellularLocation>
        <location evidence="1">Cytoplasm</location>
    </subcellularLocation>
</comment>
<comment type="similarity">
    <text evidence="1">Belongs to the peptidase M24A family. Methionine aminopeptidase type 1 subfamily.</text>
</comment>
<keyword id="KW-0002">3D-structure</keyword>
<keyword id="KW-0031">Aminopeptidase</keyword>
<keyword id="KW-0963">Cytoplasm</keyword>
<keyword id="KW-0378">Hydrolase</keyword>
<keyword id="KW-0479">Metal-binding</keyword>
<keyword id="KW-0645">Protease</keyword>
<keyword id="KW-1185">Reference proteome</keyword>
<keyword id="KW-0862">Zinc</keyword>
<keyword id="KW-0863">Zinc-finger</keyword>
<feature type="chain" id="PRO_0000451190" description="Methionine aminopeptidase 1b">
    <location>
        <begin position="1"/>
        <end position="517"/>
    </location>
</feature>
<feature type="zinc finger region" description="C6H2-type" evidence="2">
    <location>
        <begin position="114"/>
        <end position="166"/>
    </location>
</feature>
<feature type="region of interest" description="Disordered" evidence="4">
    <location>
        <begin position="74"/>
        <end position="94"/>
    </location>
</feature>
<feature type="compositionally biased region" description="Low complexity" evidence="4">
    <location>
        <begin position="79"/>
        <end position="94"/>
    </location>
</feature>
<feature type="binding site" evidence="2">
    <location>
        <position position="117"/>
    </location>
    <ligand>
        <name>Zn(2+)</name>
        <dbReference type="ChEBI" id="CHEBI:29105"/>
        <label>1</label>
    </ligand>
</feature>
<feature type="binding site" evidence="1">
    <location>
        <position position="120"/>
    </location>
    <ligand>
        <name>Zn(2+)</name>
        <dbReference type="ChEBI" id="CHEBI:29105"/>
        <label>1</label>
    </ligand>
</feature>
<feature type="binding site" evidence="1">
    <location>
        <position position="130"/>
    </location>
    <ligand>
        <name>Zn(2+)</name>
        <dbReference type="ChEBI" id="CHEBI:29105"/>
        <label>2</label>
    </ligand>
</feature>
<feature type="binding site" evidence="1">
    <location>
        <position position="133"/>
    </location>
    <ligand>
        <name>Zn(2+)</name>
        <dbReference type="ChEBI" id="CHEBI:29105"/>
        <label>2</label>
    </ligand>
</feature>
<feature type="binding site" evidence="1">
    <location>
        <position position="143"/>
    </location>
    <ligand>
        <name>Zn(2+)</name>
        <dbReference type="ChEBI" id="CHEBI:29105"/>
        <label>1</label>
    </ligand>
</feature>
<feature type="binding site" evidence="1">
    <location>
        <position position="147"/>
    </location>
    <ligand>
        <name>Zn(2+)</name>
        <dbReference type="ChEBI" id="CHEBI:29105"/>
        <label>1</label>
    </ligand>
</feature>
<feature type="binding site" evidence="1">
    <location>
        <position position="155"/>
    </location>
    <ligand>
        <name>Zn(2+)</name>
        <dbReference type="ChEBI" id="CHEBI:29105"/>
        <label>2</label>
    </ligand>
</feature>
<feature type="binding site" evidence="1">
    <location>
        <position position="159"/>
    </location>
    <ligand>
        <name>Zn(2+)</name>
        <dbReference type="ChEBI" id="CHEBI:29105"/>
        <label>2</label>
    </ligand>
</feature>
<feature type="binding site" evidence="1">
    <location>
        <position position="325"/>
    </location>
    <ligand>
        <name>a protein</name>
        <dbReference type="ChEBI" id="CHEBI:16541"/>
    </ligand>
    <ligandPart>
        <name>N-terminal L-methionine residue</name>
        <dbReference type="ChEBI" id="CHEBI:64731"/>
    </ligandPart>
</feature>
<feature type="binding site" evidence="1">
    <location>
        <position position="342"/>
    </location>
    <ligand>
        <name>Zn(2+)</name>
        <dbReference type="ChEBI" id="CHEBI:29105"/>
        <label>3</label>
    </ligand>
</feature>
<feature type="binding site" evidence="1">
    <location>
        <position position="353"/>
    </location>
    <ligand>
        <name>Zn(2+)</name>
        <dbReference type="ChEBI" id="CHEBI:29105"/>
        <label>3</label>
    </ligand>
</feature>
<feature type="binding site" evidence="1 11">
    <location>
        <position position="353"/>
    </location>
    <ligand>
        <name>Zn(2+)</name>
        <dbReference type="ChEBI" id="CHEBI:29105"/>
        <label>4</label>
        <note>catalytic</note>
    </ligand>
</feature>
<feature type="binding site" evidence="1 11">
    <location>
        <position position="419"/>
    </location>
    <ligand>
        <name>Zn(2+)</name>
        <dbReference type="ChEBI" id="CHEBI:29105"/>
        <label>4</label>
        <note>catalytic</note>
    </ligand>
</feature>
<feature type="binding site" evidence="1">
    <location>
        <position position="426"/>
    </location>
    <ligand>
        <name>a protein</name>
        <dbReference type="ChEBI" id="CHEBI:16541"/>
    </ligand>
    <ligandPart>
        <name>N-terminal L-methionine residue</name>
        <dbReference type="ChEBI" id="CHEBI:64731"/>
    </ligandPart>
</feature>
<feature type="binding site" evidence="1 11">
    <location>
        <position position="452"/>
    </location>
    <ligand>
        <name>Zn(2+)</name>
        <dbReference type="ChEBI" id="CHEBI:29105"/>
        <label>4</label>
        <note>catalytic</note>
    </ligand>
</feature>
<feature type="binding site" evidence="1">
    <location>
        <position position="483"/>
    </location>
    <ligand>
        <name>Zn(2+)</name>
        <dbReference type="ChEBI" id="CHEBI:29105"/>
        <label>3</label>
    </ligand>
</feature>
<feature type="binding site" evidence="1 11">
    <location>
        <position position="483"/>
    </location>
    <ligand>
        <name>Zn(2+)</name>
        <dbReference type="ChEBI" id="CHEBI:29105"/>
        <label>4</label>
        <note>catalytic</note>
    </ligand>
</feature>
<feature type="site" description="Important for substrate specificity to methionine" evidence="6">
    <location>
        <position position="316"/>
    </location>
</feature>
<feature type="mutagenesis site" description="50% reduction in activity with Zn(2+) as cofactor. Increases activity with Co(2+) as cofactor and acquires new substrate specificity to leucine, tryptophan and phenylalanine." evidence="6">
    <original>C</original>
    <variation>S</variation>
    <location>
        <position position="316"/>
    </location>
</feature>
<feature type="helix" evidence="12">
    <location>
        <begin position="173"/>
        <end position="180"/>
    </location>
</feature>
<feature type="turn" evidence="12">
    <location>
        <begin position="183"/>
        <end position="185"/>
    </location>
</feature>
<feature type="helix" evidence="12">
    <location>
        <begin position="192"/>
        <end position="196"/>
    </location>
</feature>
<feature type="helix" evidence="12">
    <location>
        <begin position="200"/>
        <end position="203"/>
    </location>
</feature>
<feature type="strand" evidence="12">
    <location>
        <begin position="209"/>
        <end position="211"/>
    </location>
</feature>
<feature type="turn" evidence="12">
    <location>
        <begin position="231"/>
        <end position="235"/>
    </location>
</feature>
<feature type="helix" evidence="12">
    <location>
        <begin position="239"/>
        <end position="242"/>
    </location>
</feature>
<feature type="helix" evidence="12">
    <location>
        <begin position="255"/>
        <end position="277"/>
    </location>
</feature>
<feature type="helix" evidence="12">
    <location>
        <begin position="285"/>
        <end position="298"/>
    </location>
</feature>
<feature type="turn" evidence="12">
    <location>
        <begin position="304"/>
        <end position="307"/>
    </location>
</feature>
<feature type="helix" evidence="12">
    <location>
        <begin position="308"/>
        <end position="310"/>
    </location>
</feature>
<feature type="strand" evidence="12">
    <location>
        <begin position="313"/>
        <end position="319"/>
    </location>
</feature>
<feature type="strand" evidence="12">
    <location>
        <begin position="322"/>
        <end position="324"/>
    </location>
</feature>
<feature type="strand" evidence="12">
    <location>
        <begin position="338"/>
        <end position="347"/>
    </location>
</feature>
<feature type="strand" evidence="12">
    <location>
        <begin position="350"/>
        <end position="359"/>
    </location>
</feature>
<feature type="helix" evidence="12">
    <location>
        <begin position="363"/>
        <end position="365"/>
    </location>
</feature>
<feature type="helix" evidence="12">
    <location>
        <begin position="368"/>
        <end position="387"/>
    </location>
</feature>
<feature type="helix" evidence="12">
    <location>
        <begin position="396"/>
        <end position="406"/>
    </location>
</feature>
<feature type="turn" evidence="12">
    <location>
        <begin position="407"/>
        <end position="409"/>
    </location>
</feature>
<feature type="strand" evidence="12">
    <location>
        <begin position="418"/>
        <end position="420"/>
    </location>
</feature>
<feature type="strand" evidence="12">
    <location>
        <begin position="422"/>
        <end position="431"/>
    </location>
</feature>
<feature type="strand" evidence="12">
    <location>
        <begin position="433"/>
        <end position="436"/>
    </location>
</feature>
<feature type="strand" evidence="12">
    <location>
        <begin position="448"/>
        <end position="451"/>
    </location>
</feature>
<feature type="strand" evidence="12">
    <location>
        <begin position="454"/>
        <end position="458"/>
    </location>
</feature>
<feature type="strand" evidence="12">
    <location>
        <begin position="462"/>
        <end position="464"/>
    </location>
</feature>
<feature type="strand" evidence="12">
    <location>
        <begin position="471"/>
        <end position="473"/>
    </location>
</feature>
<feature type="strand" evidence="12">
    <location>
        <begin position="479"/>
        <end position="481"/>
    </location>
</feature>
<feature type="strand" evidence="12">
    <location>
        <begin position="483"/>
        <end position="489"/>
    </location>
</feature>
<feature type="strand" evidence="12">
    <location>
        <begin position="492"/>
        <end position="495"/>
    </location>
</feature>
<feature type="helix" evidence="12">
    <location>
        <begin position="512"/>
        <end position="514"/>
    </location>
</feature>
<organism evidence="10">
    <name type="scientific">Plasmodium falciparum (isolate 3D7)</name>
    <dbReference type="NCBI Taxonomy" id="36329"/>
    <lineage>
        <taxon>Eukaryota</taxon>
        <taxon>Sar</taxon>
        <taxon>Alveolata</taxon>
        <taxon>Apicomplexa</taxon>
        <taxon>Aconoidasida</taxon>
        <taxon>Haemosporida</taxon>
        <taxon>Plasmodiidae</taxon>
        <taxon>Plasmodium</taxon>
        <taxon>Plasmodium (Laverania)</taxon>
    </lineage>
</organism>
<name>MAP1B_PLAF7</name>
<protein>
    <recommendedName>
        <fullName evidence="7">Methionine aminopeptidase 1b</fullName>
        <ecNumber evidence="3 5 6">3.4.11.18</ecNumber>
    </recommendedName>
    <alternativeName>
        <fullName evidence="7">PfMetAP1b</fullName>
    </alternativeName>
</protein>
<proteinExistence type="evidence at protein level"/>